<keyword id="KW-0238">DNA-binding</keyword>
<keyword id="KW-0539">Nucleus</keyword>
<keyword id="KW-1185">Reference proteome</keyword>
<keyword id="KW-0804">Transcription</keyword>
<keyword id="KW-0805">Transcription regulation</keyword>
<feature type="chain" id="PRO_0000091805" description="Forkhead box protein B2">
    <location>
        <begin position="1"/>
        <end position="428"/>
    </location>
</feature>
<feature type="DNA-binding region" description="Fork-head" evidence="1">
    <location>
        <begin position="12"/>
        <end position="103"/>
    </location>
</feature>
<feature type="region of interest" description="Disordered" evidence="2">
    <location>
        <begin position="118"/>
        <end position="217"/>
    </location>
</feature>
<feature type="region of interest" description="Disordered" evidence="2">
    <location>
        <begin position="408"/>
        <end position="428"/>
    </location>
</feature>
<feature type="compositionally biased region" description="Basic residues" evidence="2">
    <location>
        <begin position="136"/>
        <end position="163"/>
    </location>
</feature>
<feature type="compositionally biased region" description="Pro residues" evidence="2">
    <location>
        <begin position="164"/>
        <end position="174"/>
    </location>
</feature>
<feature type="compositionally biased region" description="Pro residues" evidence="2">
    <location>
        <begin position="183"/>
        <end position="192"/>
    </location>
</feature>
<feature type="compositionally biased region" description="Low complexity" evidence="2">
    <location>
        <begin position="193"/>
        <end position="217"/>
    </location>
</feature>
<organism>
    <name type="scientific">Mus musculus</name>
    <name type="common">Mouse</name>
    <dbReference type="NCBI Taxonomy" id="10090"/>
    <lineage>
        <taxon>Eukaryota</taxon>
        <taxon>Metazoa</taxon>
        <taxon>Chordata</taxon>
        <taxon>Craniata</taxon>
        <taxon>Vertebrata</taxon>
        <taxon>Euteleostomi</taxon>
        <taxon>Mammalia</taxon>
        <taxon>Eutheria</taxon>
        <taxon>Euarchontoglires</taxon>
        <taxon>Glires</taxon>
        <taxon>Rodentia</taxon>
        <taxon>Myomorpha</taxon>
        <taxon>Muroidea</taxon>
        <taxon>Muridae</taxon>
        <taxon>Murinae</taxon>
        <taxon>Mus</taxon>
        <taxon>Mus</taxon>
    </lineage>
</organism>
<gene>
    <name type="primary">Foxb2</name>
    <name type="synonym">Fkh4</name>
</gene>
<name>FOXB2_MOUSE</name>
<proteinExistence type="evidence at transcript level"/>
<accession>Q64733</accession>
<evidence type="ECO:0000255" key="1">
    <source>
        <dbReference type="PROSITE-ProRule" id="PRU00089"/>
    </source>
</evidence>
<evidence type="ECO:0000256" key="2">
    <source>
        <dbReference type="SAM" id="MobiDB-lite"/>
    </source>
</evidence>
<evidence type="ECO:0000269" key="3">
    <source>
    </source>
</evidence>
<evidence type="ECO:0000305" key="4"/>
<comment type="function">
    <text evidence="4">Transcription factor.</text>
</comment>
<comment type="subcellular location">
    <subcellularLocation>
        <location evidence="4">Nucleus</location>
    </subcellularLocation>
</comment>
<comment type="developmental stage">
    <text evidence="3">Expressed during embryogenesis.</text>
</comment>
<reference key="1">
    <citation type="journal article" date="1996" name="Mech. Dev.">
        <title>Expression of the winged helix genes fkh-4 and fkh-5 defines domains in the central nervous system.</title>
        <authorList>
            <person name="Kaestner K.H."/>
            <person name="Schuetz G."/>
            <person name="Monaghan A.P."/>
        </authorList>
    </citation>
    <scope>NUCLEOTIDE SEQUENCE [MRNA]</scope>
</reference>
<reference key="2">
    <citation type="journal article" date="1993" name="Proc. Natl. Acad. Sci. U.S.A.">
        <title>Six members of the mouse forkhead gene family are developmentally regulated.</title>
        <authorList>
            <person name="Kaestner K.H."/>
            <person name="Lee K.H."/>
            <person name="Schloendorff J."/>
            <person name="Hiemisch H."/>
            <person name="Monaghan A.P."/>
            <person name="Schuetz G."/>
        </authorList>
    </citation>
    <scope>NUCLEOTIDE SEQUENCE [GENOMIC DNA] OF 4-114</scope>
    <scope>DEVELOPMENTAL STAGE</scope>
    <source>
        <strain>129</strain>
    </source>
</reference>
<dbReference type="EMBL" id="X92591">
    <property type="protein sequence ID" value="CAA63335.1"/>
    <property type="molecule type" value="mRNA"/>
</dbReference>
<dbReference type="EMBL" id="X71942">
    <property type="protein sequence ID" value="CAA50744.1"/>
    <property type="molecule type" value="Genomic_DNA"/>
</dbReference>
<dbReference type="CCDS" id="CCDS29686.1"/>
<dbReference type="PIR" id="D47746">
    <property type="entry name" value="D47746"/>
</dbReference>
<dbReference type="RefSeq" id="NP_032049.1">
    <property type="nucleotide sequence ID" value="NM_008023.2"/>
</dbReference>
<dbReference type="SMR" id="Q64733"/>
<dbReference type="STRING" id="10090.ENSMUSP00000072687"/>
<dbReference type="GlyGen" id="Q64733">
    <property type="glycosylation" value="2 sites"/>
</dbReference>
<dbReference type="PhosphoSitePlus" id="Q64733"/>
<dbReference type="PaxDb" id="10090-ENSMUSP00000072687"/>
<dbReference type="Antibodypedia" id="12836">
    <property type="antibodies" value="171 antibodies from 28 providers"/>
</dbReference>
<dbReference type="DNASU" id="14240"/>
<dbReference type="Ensembl" id="ENSMUST00000072915.4">
    <property type="protein sequence ID" value="ENSMUSP00000072687.3"/>
    <property type="gene ID" value="ENSMUSG00000056829.5"/>
</dbReference>
<dbReference type="GeneID" id="14240"/>
<dbReference type="KEGG" id="mmu:14240"/>
<dbReference type="UCSC" id="uc008gxc.1">
    <property type="organism name" value="mouse"/>
</dbReference>
<dbReference type="AGR" id="MGI:1347468"/>
<dbReference type="CTD" id="442425"/>
<dbReference type="MGI" id="MGI:1347468">
    <property type="gene designation" value="Foxb2"/>
</dbReference>
<dbReference type="VEuPathDB" id="HostDB:ENSMUSG00000056829"/>
<dbReference type="eggNOG" id="KOG3562">
    <property type="taxonomic scope" value="Eukaryota"/>
</dbReference>
<dbReference type="GeneTree" id="ENSGT00940000161970"/>
<dbReference type="HOGENOM" id="CLU_040357_2_1_1"/>
<dbReference type="InParanoid" id="Q64733"/>
<dbReference type="OMA" id="HPPAQTM"/>
<dbReference type="OrthoDB" id="5954824at2759"/>
<dbReference type="PhylomeDB" id="Q64733"/>
<dbReference type="TreeFam" id="TF316127"/>
<dbReference type="BioGRID-ORCS" id="14240">
    <property type="hits" value="1 hit in 77 CRISPR screens"/>
</dbReference>
<dbReference type="PRO" id="PR:Q64733"/>
<dbReference type="Proteomes" id="UP000000589">
    <property type="component" value="Chromosome 19"/>
</dbReference>
<dbReference type="RNAct" id="Q64733">
    <property type="molecule type" value="protein"/>
</dbReference>
<dbReference type="Bgee" id="ENSMUSG00000056829">
    <property type="expression patterns" value="Expressed in strand of hair and 36 other cell types or tissues"/>
</dbReference>
<dbReference type="ExpressionAtlas" id="Q64733">
    <property type="expression patterns" value="baseline and differential"/>
</dbReference>
<dbReference type="GO" id="GO:0005634">
    <property type="term" value="C:nucleus"/>
    <property type="evidence" value="ECO:0007669"/>
    <property type="project" value="UniProtKB-SubCell"/>
</dbReference>
<dbReference type="GO" id="GO:0003700">
    <property type="term" value="F:DNA-binding transcription factor activity"/>
    <property type="evidence" value="ECO:0007669"/>
    <property type="project" value="InterPro"/>
</dbReference>
<dbReference type="GO" id="GO:0043565">
    <property type="term" value="F:sequence-specific DNA binding"/>
    <property type="evidence" value="ECO:0007669"/>
    <property type="project" value="InterPro"/>
</dbReference>
<dbReference type="CDD" id="cd20043">
    <property type="entry name" value="FH_FOXB2"/>
    <property type="match status" value="1"/>
</dbReference>
<dbReference type="FunFam" id="1.10.10.10:FF:000082">
    <property type="entry name" value="forkhead box protein B2"/>
    <property type="match status" value="1"/>
</dbReference>
<dbReference type="Gene3D" id="1.10.10.10">
    <property type="entry name" value="Winged helix-like DNA-binding domain superfamily/Winged helix DNA-binding domain"/>
    <property type="match status" value="1"/>
</dbReference>
<dbReference type="InterPro" id="IPR001766">
    <property type="entry name" value="Fork_head_dom"/>
</dbReference>
<dbReference type="InterPro" id="IPR050211">
    <property type="entry name" value="FOX_domain-containing"/>
</dbReference>
<dbReference type="InterPro" id="IPR047389">
    <property type="entry name" value="FOXB1_B2_FH"/>
</dbReference>
<dbReference type="InterPro" id="IPR018122">
    <property type="entry name" value="TF_fork_head_CS_1"/>
</dbReference>
<dbReference type="InterPro" id="IPR030456">
    <property type="entry name" value="TF_fork_head_CS_2"/>
</dbReference>
<dbReference type="InterPro" id="IPR036388">
    <property type="entry name" value="WH-like_DNA-bd_sf"/>
</dbReference>
<dbReference type="InterPro" id="IPR036390">
    <property type="entry name" value="WH_DNA-bd_sf"/>
</dbReference>
<dbReference type="PANTHER" id="PTHR11829">
    <property type="entry name" value="FORKHEAD BOX PROTEIN"/>
    <property type="match status" value="1"/>
</dbReference>
<dbReference type="PANTHER" id="PTHR11829:SF215">
    <property type="entry name" value="FORKHEAD BOX PROTEIN B2"/>
    <property type="match status" value="1"/>
</dbReference>
<dbReference type="Pfam" id="PF00250">
    <property type="entry name" value="Forkhead"/>
    <property type="match status" value="1"/>
</dbReference>
<dbReference type="PRINTS" id="PR00053">
    <property type="entry name" value="FORKHEAD"/>
</dbReference>
<dbReference type="SMART" id="SM00339">
    <property type="entry name" value="FH"/>
    <property type="match status" value="1"/>
</dbReference>
<dbReference type="SUPFAM" id="SSF46785">
    <property type="entry name" value="Winged helix' DNA-binding domain"/>
    <property type="match status" value="1"/>
</dbReference>
<dbReference type="PROSITE" id="PS00657">
    <property type="entry name" value="FORK_HEAD_1"/>
    <property type="match status" value="1"/>
</dbReference>
<dbReference type="PROSITE" id="PS00658">
    <property type="entry name" value="FORK_HEAD_2"/>
    <property type="match status" value="1"/>
</dbReference>
<dbReference type="PROSITE" id="PS50039">
    <property type="entry name" value="FORK_HEAD_3"/>
    <property type="match status" value="1"/>
</dbReference>
<sequence>MPRPGKSSYSDQKPPYSYISLTAMAIQHSAEKMLPLSDIYKFIMERFPYYREHTQRWQNSLRHNLSFNDCFIKIPRRPDQPGKGSFWALHPDCGDMFENGSFLRRRKRFKVLRADHAHLHSGSSKGAPGTGPGGHLHPHHPHHAHHHHHHHHHAAHHHHHHHPPQPPPPPPPHMVPYFHQQPAPAPQPPHLPSQPAQQPQPQSQPPQTSHPGKMQEAAAVAAAAAAAAAAAVGSVGRLSQFPPYGLGSAAAAAAAAAASTTGFKHPFAIENIIGRDYKGVLQAGGLPLASVMHHLGYPVPGQLSNVVGSVWPHVGVMDSVAAAAAAAAAAGVPVGPEYGAFGVPVKALCHSANQSLPAVPVPIKPTPALPPVTTLPPALSVPTASQQLPAPSTVCAAAASPTAPLLEPTAAGRADSKGSSLHSVLVHS</sequence>
<protein>
    <recommendedName>
        <fullName>Forkhead box protein B2</fullName>
    </recommendedName>
    <alternativeName>
        <fullName>Transcription factor FKH-4</fullName>
    </alternativeName>
</protein>